<accession>Q98PY0</accession>
<proteinExistence type="inferred from homology"/>
<organism>
    <name type="scientific">Mycoplasmopsis pulmonis (strain UAB CTIP)</name>
    <name type="common">Mycoplasma pulmonis</name>
    <dbReference type="NCBI Taxonomy" id="272635"/>
    <lineage>
        <taxon>Bacteria</taxon>
        <taxon>Bacillati</taxon>
        <taxon>Mycoplasmatota</taxon>
        <taxon>Mycoplasmoidales</taxon>
        <taxon>Metamycoplasmataceae</taxon>
        <taxon>Mycoplasmopsis</taxon>
    </lineage>
</organism>
<gene>
    <name evidence="1" type="primary">rplC</name>
    <name type="ordered locus">MYPU_5890</name>
</gene>
<sequence>MKGILGRKVGMTQIFSDNGIVIPVTLIEVKPNIVSNVLTDEKNGYKAIQLSLEDKKKSRQRKPEIGHFAKANTTPKRFVKEIRDMQGFELGSNVDVSIFTPGEFVDVTGISKGKGFAGTIKRHNQKIGPKSHGGGGGSKPVRQTGSLGDISGNKVVKGMTMPGHLGHEQVTIQNLEVIMTDVKNNILLVKGAVPGPKKGFVVIKECAKKIPSKEAVKLVDLEIVAKKNHLFEISKKYNINLKNDMSIEEMESLIEKAKEEQEGKGE</sequence>
<keyword id="KW-1185">Reference proteome</keyword>
<keyword id="KW-0687">Ribonucleoprotein</keyword>
<keyword id="KW-0689">Ribosomal protein</keyword>
<keyword id="KW-0694">RNA-binding</keyword>
<keyword id="KW-0699">rRNA-binding</keyword>
<name>RL3_MYCPU</name>
<evidence type="ECO:0000255" key="1">
    <source>
        <dbReference type="HAMAP-Rule" id="MF_01325"/>
    </source>
</evidence>
<evidence type="ECO:0000256" key="2">
    <source>
        <dbReference type="SAM" id="MobiDB-lite"/>
    </source>
</evidence>
<evidence type="ECO:0000305" key="3"/>
<feature type="chain" id="PRO_0000077124" description="Large ribosomal subunit protein uL3">
    <location>
        <begin position="1"/>
        <end position="266"/>
    </location>
</feature>
<feature type="region of interest" description="Disordered" evidence="2">
    <location>
        <begin position="124"/>
        <end position="149"/>
    </location>
</feature>
<dbReference type="EMBL" id="AL445565">
    <property type="protein sequence ID" value="CAC13762.1"/>
    <property type="molecule type" value="Genomic_DNA"/>
</dbReference>
<dbReference type="PIR" id="E90585">
    <property type="entry name" value="E90585"/>
</dbReference>
<dbReference type="RefSeq" id="WP_010925390.1">
    <property type="nucleotide sequence ID" value="NC_002771.1"/>
</dbReference>
<dbReference type="SMR" id="Q98PY0"/>
<dbReference type="STRING" id="272635.gene:17577196"/>
<dbReference type="KEGG" id="mpu:MYPU_5890"/>
<dbReference type="eggNOG" id="COG0087">
    <property type="taxonomic scope" value="Bacteria"/>
</dbReference>
<dbReference type="HOGENOM" id="CLU_044142_4_0_14"/>
<dbReference type="BioCyc" id="MPUL272635:G1GT6-600-MONOMER"/>
<dbReference type="Proteomes" id="UP000000528">
    <property type="component" value="Chromosome"/>
</dbReference>
<dbReference type="GO" id="GO:0022625">
    <property type="term" value="C:cytosolic large ribosomal subunit"/>
    <property type="evidence" value="ECO:0007669"/>
    <property type="project" value="TreeGrafter"/>
</dbReference>
<dbReference type="GO" id="GO:0019843">
    <property type="term" value="F:rRNA binding"/>
    <property type="evidence" value="ECO:0007669"/>
    <property type="project" value="UniProtKB-UniRule"/>
</dbReference>
<dbReference type="GO" id="GO:0003735">
    <property type="term" value="F:structural constituent of ribosome"/>
    <property type="evidence" value="ECO:0007669"/>
    <property type="project" value="InterPro"/>
</dbReference>
<dbReference type="GO" id="GO:0006412">
    <property type="term" value="P:translation"/>
    <property type="evidence" value="ECO:0007669"/>
    <property type="project" value="UniProtKB-UniRule"/>
</dbReference>
<dbReference type="FunFam" id="2.40.30.10:FF:000004">
    <property type="entry name" value="50S ribosomal protein L3"/>
    <property type="match status" value="1"/>
</dbReference>
<dbReference type="Gene3D" id="3.30.160.810">
    <property type="match status" value="1"/>
</dbReference>
<dbReference type="Gene3D" id="2.40.30.10">
    <property type="entry name" value="Translation factors"/>
    <property type="match status" value="1"/>
</dbReference>
<dbReference type="HAMAP" id="MF_01325_B">
    <property type="entry name" value="Ribosomal_uL3_B"/>
    <property type="match status" value="1"/>
</dbReference>
<dbReference type="InterPro" id="IPR000597">
    <property type="entry name" value="Ribosomal_uL3"/>
</dbReference>
<dbReference type="InterPro" id="IPR019927">
    <property type="entry name" value="Ribosomal_uL3_bac/org-type"/>
</dbReference>
<dbReference type="InterPro" id="IPR019926">
    <property type="entry name" value="Ribosomal_uL3_CS"/>
</dbReference>
<dbReference type="InterPro" id="IPR009000">
    <property type="entry name" value="Transl_B-barrel_sf"/>
</dbReference>
<dbReference type="NCBIfam" id="TIGR03625">
    <property type="entry name" value="L3_bact"/>
    <property type="match status" value="1"/>
</dbReference>
<dbReference type="PANTHER" id="PTHR11229">
    <property type="entry name" value="50S RIBOSOMAL PROTEIN L3"/>
    <property type="match status" value="1"/>
</dbReference>
<dbReference type="PANTHER" id="PTHR11229:SF16">
    <property type="entry name" value="LARGE RIBOSOMAL SUBUNIT PROTEIN UL3C"/>
    <property type="match status" value="1"/>
</dbReference>
<dbReference type="Pfam" id="PF00297">
    <property type="entry name" value="Ribosomal_L3"/>
    <property type="match status" value="1"/>
</dbReference>
<dbReference type="SUPFAM" id="SSF50447">
    <property type="entry name" value="Translation proteins"/>
    <property type="match status" value="1"/>
</dbReference>
<dbReference type="PROSITE" id="PS00474">
    <property type="entry name" value="RIBOSOMAL_L3"/>
    <property type="match status" value="1"/>
</dbReference>
<comment type="function">
    <text evidence="1">One of the primary rRNA binding proteins, it binds directly near the 3'-end of the 23S rRNA, where it nucleates assembly of the 50S subunit.</text>
</comment>
<comment type="subunit">
    <text evidence="1">Part of the 50S ribosomal subunit. Forms a cluster with proteins L14 and L19.</text>
</comment>
<comment type="similarity">
    <text evidence="1">Belongs to the universal ribosomal protein uL3 family.</text>
</comment>
<protein>
    <recommendedName>
        <fullName evidence="1">Large ribosomal subunit protein uL3</fullName>
    </recommendedName>
    <alternativeName>
        <fullName evidence="3">50S ribosomal protein L3</fullName>
    </alternativeName>
</protein>
<reference key="1">
    <citation type="journal article" date="2001" name="Nucleic Acids Res.">
        <title>The complete genome sequence of the murine respiratory pathogen Mycoplasma pulmonis.</title>
        <authorList>
            <person name="Chambaud I."/>
            <person name="Heilig R."/>
            <person name="Ferris S."/>
            <person name="Barbe V."/>
            <person name="Samson D."/>
            <person name="Galisson F."/>
            <person name="Moszer I."/>
            <person name="Dybvig K."/>
            <person name="Wroblewski H."/>
            <person name="Viari A."/>
            <person name="Rocha E.P.C."/>
            <person name="Blanchard A."/>
        </authorList>
    </citation>
    <scope>NUCLEOTIDE SEQUENCE [LARGE SCALE GENOMIC DNA]</scope>
    <source>
        <strain>UAB CTIP</strain>
    </source>
</reference>